<organism>
    <name type="scientific">Staphylococcus saprophyticus subsp. saprophyticus (strain ATCC 15305 / DSM 20229 / NCIMB 8711 / NCTC 7292 / S-41)</name>
    <dbReference type="NCBI Taxonomy" id="342451"/>
    <lineage>
        <taxon>Bacteria</taxon>
        <taxon>Bacillati</taxon>
        <taxon>Bacillota</taxon>
        <taxon>Bacilli</taxon>
        <taxon>Bacillales</taxon>
        <taxon>Staphylococcaceae</taxon>
        <taxon>Staphylococcus</taxon>
    </lineage>
</organism>
<sequence length="508" mass="54700">MSQTETQENKGLGRKVQAFGSFLSSMIMPNIGAFIAWGFIAAIFIDGGWWPNKDLSELAGPMISYLIPLLIAYSGGRLIHEMRGGIIAAVATMGVIVALPDTPMLLGAMIMGPLVGWLMKKTDEFIQPRTPQGFEMLFNNFSAGILGFIMTIVGFKILAPIMEFIMHILSLAVEALVHAHLLPLVSIIVEPAKIVFLNNAINHGVFTPLGADQAASAGQSILYTIESNPGPGLGILVAYMIFGKGTAKATSYGAGIIHFLGGIHEIYFPYVLMRPLLFIAVILGGMTGVATYSLLDFGFKSPASPGSFIVYMLNAPKGEFLHMVLGVLLAAIVSFIVAALILKFTKEPEEDLEAATEKMEASKGKKSSVSSKLKGNEDNNATSTTASTSTSENNEEQSEEALLDNYDTENVDAHDYSKVNHVIFACDAGMGSSAMGASMLRNKFKKAGIQDVNVTNTAINQLPSDAQLVITQKKLTDRAIKQVPNAIHISVDNFLNSPRYDELLENLK</sequence>
<name>PTMCB_STAS1</name>
<feature type="chain" id="PRO_0000186628" description="PTS system mannitol-specific EIICB component">
    <location>
        <begin position="1"/>
        <end position="508"/>
    </location>
</feature>
<feature type="topological domain" description="Cytoplasmic" evidence="1">
    <location>
        <begin position="1"/>
        <end position="30"/>
    </location>
</feature>
<feature type="transmembrane region" description="Helical" evidence="1">
    <location>
        <begin position="31"/>
        <end position="52"/>
    </location>
</feature>
<feature type="topological domain" description="Extracellular" evidence="1">
    <location>
        <begin position="53"/>
        <end position="56"/>
    </location>
</feature>
<feature type="transmembrane region" description="Helical" evidence="1">
    <location>
        <begin position="57"/>
        <end position="77"/>
    </location>
</feature>
<feature type="topological domain" description="Cytoplasmic" evidence="1">
    <location>
        <begin position="78"/>
        <end position="141"/>
    </location>
</feature>
<feature type="transmembrane region" description="Helical" evidence="1">
    <location>
        <begin position="142"/>
        <end position="163"/>
    </location>
</feature>
<feature type="topological domain" description="Extracellular" evidence="1">
    <location>
        <begin position="164"/>
        <end position="172"/>
    </location>
</feature>
<feature type="transmembrane region" description="Helical" evidence="1">
    <location>
        <begin position="173"/>
        <end position="193"/>
    </location>
</feature>
<feature type="topological domain" description="Cytoplasmic" evidence="1">
    <location>
        <begin position="194"/>
        <end position="280"/>
    </location>
</feature>
<feature type="transmembrane region" description="Helical" evidence="1">
    <location>
        <begin position="281"/>
        <end position="300"/>
    </location>
</feature>
<feature type="topological domain" description="Extracellular" evidence="1">
    <location>
        <begin position="301"/>
        <end position="320"/>
    </location>
</feature>
<feature type="transmembrane region" description="Helical" evidence="1">
    <location>
        <begin position="321"/>
        <end position="342"/>
    </location>
</feature>
<feature type="topological domain" description="Cytoplasmic" evidence="1">
    <location>
        <begin position="343"/>
        <end position="508"/>
    </location>
</feature>
<feature type="domain" description="PTS EIIC type-2" evidence="4">
    <location>
        <begin position="19"/>
        <end position="351"/>
    </location>
</feature>
<feature type="domain" description="PTS EIIB type-2" evidence="3">
    <location>
        <begin position="420"/>
        <end position="508"/>
    </location>
</feature>
<feature type="region of interest" description="Disordered" evidence="5">
    <location>
        <begin position="355"/>
        <end position="400"/>
    </location>
</feature>
<feature type="compositionally biased region" description="Low complexity" evidence="5">
    <location>
        <begin position="367"/>
        <end position="392"/>
    </location>
</feature>
<feature type="active site" description="Phosphocysteine intermediate; for EIIB activity" evidence="1 2">
    <location>
        <position position="426"/>
    </location>
</feature>
<feature type="modified residue" description="Phosphocysteine; by EIIA" evidence="1 2 3">
    <location>
        <position position="426"/>
    </location>
</feature>
<accession>Q49ZA3</accession>
<dbReference type="EC" id="2.7.1.197" evidence="1 2"/>
<dbReference type="EMBL" id="AP008934">
    <property type="protein sequence ID" value="BAE17873.1"/>
    <property type="molecule type" value="Genomic_DNA"/>
</dbReference>
<dbReference type="RefSeq" id="WP_011302638.1">
    <property type="nucleotide sequence ID" value="NZ_MTGA01000032.1"/>
</dbReference>
<dbReference type="SMR" id="Q49ZA3"/>
<dbReference type="GeneID" id="3615929"/>
<dbReference type="KEGG" id="ssp:SSP0728"/>
<dbReference type="PATRIC" id="fig|342451.11.peg.730"/>
<dbReference type="eggNOG" id="COG2213">
    <property type="taxonomic scope" value="Bacteria"/>
</dbReference>
<dbReference type="HOGENOM" id="CLU_028721_2_1_9"/>
<dbReference type="OrthoDB" id="9814222at2"/>
<dbReference type="Proteomes" id="UP000006371">
    <property type="component" value="Chromosome"/>
</dbReference>
<dbReference type="GO" id="GO:0005886">
    <property type="term" value="C:plasma membrane"/>
    <property type="evidence" value="ECO:0007669"/>
    <property type="project" value="UniProtKB-SubCell"/>
</dbReference>
<dbReference type="GO" id="GO:0016301">
    <property type="term" value="F:kinase activity"/>
    <property type="evidence" value="ECO:0007669"/>
    <property type="project" value="UniProtKB-KW"/>
</dbReference>
<dbReference type="GO" id="GO:0022872">
    <property type="term" value="F:protein-N(PI)-phosphohistidine-mannitol phosphotransferase system transmembrane transporter activity"/>
    <property type="evidence" value="ECO:0007669"/>
    <property type="project" value="InterPro"/>
</dbReference>
<dbReference type="GO" id="GO:0090563">
    <property type="term" value="F:protein-phosphocysteine-sugar phosphotransferase activity"/>
    <property type="evidence" value="ECO:0007669"/>
    <property type="project" value="TreeGrafter"/>
</dbReference>
<dbReference type="GO" id="GO:0009401">
    <property type="term" value="P:phosphoenolpyruvate-dependent sugar phosphotransferase system"/>
    <property type="evidence" value="ECO:0007669"/>
    <property type="project" value="UniProtKB-KW"/>
</dbReference>
<dbReference type="CDD" id="cd05567">
    <property type="entry name" value="PTS_IIB_mannitol"/>
    <property type="match status" value="1"/>
</dbReference>
<dbReference type="FunFam" id="3.40.50.2300:FF:000047">
    <property type="entry name" value="PTS system mannitol-specific transporter subunit IICBA"/>
    <property type="match status" value="1"/>
</dbReference>
<dbReference type="Gene3D" id="3.40.50.2300">
    <property type="match status" value="1"/>
</dbReference>
<dbReference type="InterPro" id="IPR036095">
    <property type="entry name" value="PTS_EIIB-like_sf"/>
</dbReference>
<dbReference type="InterPro" id="IPR013011">
    <property type="entry name" value="PTS_EIIB_2"/>
</dbReference>
<dbReference type="InterPro" id="IPR003501">
    <property type="entry name" value="PTS_EIIB_2/3"/>
</dbReference>
<dbReference type="InterPro" id="IPR029503">
    <property type="entry name" value="PTS_EIIB_mannitol"/>
</dbReference>
<dbReference type="InterPro" id="IPR003352">
    <property type="entry name" value="PTS_EIIC"/>
</dbReference>
<dbReference type="InterPro" id="IPR013014">
    <property type="entry name" value="PTS_EIIC_2"/>
</dbReference>
<dbReference type="InterPro" id="IPR004718">
    <property type="entry name" value="PTS_IIC_mtl"/>
</dbReference>
<dbReference type="InterPro" id="IPR050893">
    <property type="entry name" value="Sugar_PTS"/>
</dbReference>
<dbReference type="NCBIfam" id="TIGR00851">
    <property type="entry name" value="mtlA"/>
    <property type="match status" value="1"/>
</dbReference>
<dbReference type="PANTHER" id="PTHR30181">
    <property type="entry name" value="MANNITOL PERMEASE IIC COMPONENT"/>
    <property type="match status" value="1"/>
</dbReference>
<dbReference type="PANTHER" id="PTHR30181:SF2">
    <property type="entry name" value="PTS SYSTEM MANNITOL-SPECIFIC EIICBA COMPONENT"/>
    <property type="match status" value="1"/>
</dbReference>
<dbReference type="Pfam" id="PF02378">
    <property type="entry name" value="PTS_EIIC"/>
    <property type="match status" value="1"/>
</dbReference>
<dbReference type="Pfam" id="PF02302">
    <property type="entry name" value="PTS_IIB"/>
    <property type="match status" value="1"/>
</dbReference>
<dbReference type="SUPFAM" id="SSF52794">
    <property type="entry name" value="PTS system IIB component-like"/>
    <property type="match status" value="1"/>
</dbReference>
<dbReference type="PROSITE" id="PS51099">
    <property type="entry name" value="PTS_EIIB_TYPE_2"/>
    <property type="match status" value="1"/>
</dbReference>
<dbReference type="PROSITE" id="PS51104">
    <property type="entry name" value="PTS_EIIC_TYPE_2"/>
    <property type="match status" value="1"/>
</dbReference>
<comment type="function">
    <text evidence="2">The phosphoenolpyruvate-dependent sugar phosphotransferase system (sugar PTS), a major carbohydrate active transport system, catalyzes the phosphorylation of incoming sugar substrates concomitantly with their translocation across the cell membrane. The enzyme II CmtAB PTS system is involved in D-mannitol transport.</text>
</comment>
<comment type="catalytic activity">
    <reaction evidence="1 2">
        <text>D-mannitol(out) + N(pros)-phospho-L-histidyl-[protein] = D-mannitol 1-phosphate(in) + L-histidyl-[protein]</text>
        <dbReference type="Rhea" id="RHEA:33363"/>
        <dbReference type="Rhea" id="RHEA-COMP:9745"/>
        <dbReference type="Rhea" id="RHEA-COMP:9746"/>
        <dbReference type="ChEBI" id="CHEBI:16899"/>
        <dbReference type="ChEBI" id="CHEBI:29979"/>
        <dbReference type="ChEBI" id="CHEBI:61381"/>
        <dbReference type="ChEBI" id="CHEBI:64837"/>
        <dbReference type="EC" id="2.7.1.197"/>
    </reaction>
</comment>
<comment type="subunit">
    <text evidence="2">Homodimer.</text>
</comment>
<comment type="subcellular location">
    <subcellularLocation>
        <location evidence="4">Cell membrane</location>
        <topology evidence="4">Multi-pass membrane protein</topology>
    </subcellularLocation>
</comment>
<comment type="domain">
    <text evidence="4">The EIIC type-2 domain forms the PTS system translocation channel and contains the specific substrate-binding site.</text>
</comment>
<comment type="domain">
    <text evidence="3">The PTS EIIB type-2 domain is phosphorylated by phospho-EIIA on a cysteinyl residue. Then, it transfers the phosphoryl group to the sugar substrate concomitantly with the sugar uptake processed by the PTS EIIC type-2 domain.</text>
</comment>
<gene>
    <name type="primary">mtlA</name>
    <name type="ordered locus">SSP0728</name>
</gene>
<reference key="1">
    <citation type="journal article" date="2005" name="Proc. Natl. Acad. Sci. U.S.A.">
        <title>Whole genome sequence of Staphylococcus saprophyticus reveals the pathogenesis of uncomplicated urinary tract infection.</title>
        <authorList>
            <person name="Kuroda M."/>
            <person name="Yamashita A."/>
            <person name="Hirakawa H."/>
            <person name="Kumano M."/>
            <person name="Morikawa K."/>
            <person name="Higashide M."/>
            <person name="Maruyama A."/>
            <person name="Inose Y."/>
            <person name="Matoba K."/>
            <person name="Toh H."/>
            <person name="Kuhara S."/>
            <person name="Hattori M."/>
            <person name="Ohta T."/>
        </authorList>
    </citation>
    <scope>NUCLEOTIDE SEQUENCE [LARGE SCALE GENOMIC DNA]</scope>
    <source>
        <strain>ATCC 15305 / DSM 20229 / NCIMB 8711 / NCTC 7292 / S-41</strain>
    </source>
</reference>
<proteinExistence type="inferred from homology"/>
<evidence type="ECO:0000250" key="1">
    <source>
        <dbReference type="UniProtKB" id="P00550"/>
    </source>
</evidence>
<evidence type="ECO:0000250" key="2">
    <source>
        <dbReference type="UniProtKB" id="P28008"/>
    </source>
</evidence>
<evidence type="ECO:0000255" key="3">
    <source>
        <dbReference type="PROSITE-ProRule" id="PRU00422"/>
    </source>
</evidence>
<evidence type="ECO:0000255" key="4">
    <source>
        <dbReference type="PROSITE-ProRule" id="PRU00427"/>
    </source>
</evidence>
<evidence type="ECO:0000256" key="5">
    <source>
        <dbReference type="SAM" id="MobiDB-lite"/>
    </source>
</evidence>
<protein>
    <recommendedName>
        <fullName evidence="2">PTS system mannitol-specific EIICB component</fullName>
    </recommendedName>
    <alternativeName>
        <fullName evidence="2">EIICB-Mtl</fullName>
        <shortName evidence="2">EII-Mtl</shortName>
    </alternativeName>
    <domain>
        <recommendedName>
            <fullName evidence="2">Mannitol permease IIC component</fullName>
        </recommendedName>
        <alternativeName>
            <fullName evidence="2">PTS system mannitol-specific EIIC component</fullName>
        </alternativeName>
    </domain>
    <domain>
        <recommendedName>
            <fullName evidence="2">Mannitol-specific phosphotransferase enzyme IIB component</fullName>
            <ecNumber evidence="1 2">2.7.1.197</ecNumber>
        </recommendedName>
        <alternativeName>
            <fullName evidence="2">PTS system mannitol-specific EIIB component</fullName>
        </alternativeName>
    </domain>
</protein>
<keyword id="KW-1003">Cell membrane</keyword>
<keyword id="KW-0418">Kinase</keyword>
<keyword id="KW-0472">Membrane</keyword>
<keyword id="KW-0597">Phosphoprotein</keyword>
<keyword id="KW-0598">Phosphotransferase system</keyword>
<keyword id="KW-1185">Reference proteome</keyword>
<keyword id="KW-0762">Sugar transport</keyword>
<keyword id="KW-0808">Transferase</keyword>
<keyword id="KW-0812">Transmembrane</keyword>
<keyword id="KW-1133">Transmembrane helix</keyword>
<keyword id="KW-0813">Transport</keyword>